<gene>
    <name evidence="1" type="primary">argG</name>
    <name type="ordered locus">BUAP5A_049</name>
</gene>
<protein>
    <recommendedName>
        <fullName evidence="1">Argininosuccinate synthase</fullName>
        <ecNumber evidence="1">6.3.4.5</ecNumber>
    </recommendedName>
    <alternativeName>
        <fullName evidence="1">Citrulline--aspartate ligase</fullName>
    </alternativeName>
</protein>
<keyword id="KW-0028">Amino-acid biosynthesis</keyword>
<keyword id="KW-0055">Arginine biosynthesis</keyword>
<keyword id="KW-0067">ATP-binding</keyword>
<keyword id="KW-0963">Cytoplasm</keyword>
<keyword id="KW-0436">Ligase</keyword>
<keyword id="KW-0547">Nucleotide-binding</keyword>
<name>ASSY_BUCA5</name>
<accession>B8D8K8</accession>
<sequence length="403" mass="45073">MIRKKNNKVVLAYSGGLDTSAIIPWLKENYNFEVVAFVADIGQSKKDLNGIEKKSLESGASSCHVFDLKEEFIENYVYPVLKTGALYEGSYLLGTAMARPIIAKKQVELALNIGANSLCHGATGKGNDQVRFEMAYAALAPNLNVIAPWREWNLNSRESLLKYLDKKNISTTATLEKIYSKDENSWHISTEGGLLENPWNQSNEDCWSWTVNPEDAPEKPEYVSLQLKEGCVVSVNNQKLNPLKCVEELNSLGAKHGIGRIDIIENRLIGMKSRGCYETPGGTIIMTAIKAIEQLVLDRESFRWREKIGLEMSSIVYDGRWFSPIRKSLQAAADSLSLEITGEVILKLYKGSVTAVQKKSPNSLYSEEYATFGEDKVYKQSDADGFIRLFSLSSKIRAQNMLK</sequence>
<comment type="catalytic activity">
    <reaction evidence="1">
        <text>L-citrulline + L-aspartate + ATP = 2-(N(omega)-L-arginino)succinate + AMP + diphosphate + H(+)</text>
        <dbReference type="Rhea" id="RHEA:10932"/>
        <dbReference type="ChEBI" id="CHEBI:15378"/>
        <dbReference type="ChEBI" id="CHEBI:29991"/>
        <dbReference type="ChEBI" id="CHEBI:30616"/>
        <dbReference type="ChEBI" id="CHEBI:33019"/>
        <dbReference type="ChEBI" id="CHEBI:57472"/>
        <dbReference type="ChEBI" id="CHEBI:57743"/>
        <dbReference type="ChEBI" id="CHEBI:456215"/>
        <dbReference type="EC" id="6.3.4.5"/>
    </reaction>
</comment>
<comment type="pathway">
    <text evidence="1">Amino-acid biosynthesis; L-arginine biosynthesis; L-arginine from L-ornithine and carbamoyl phosphate: step 2/3.</text>
</comment>
<comment type="subunit">
    <text evidence="1">Homotetramer.</text>
</comment>
<comment type="subcellular location">
    <subcellularLocation>
        <location evidence="1">Cytoplasm</location>
    </subcellularLocation>
</comment>
<comment type="similarity">
    <text evidence="1">Belongs to the argininosuccinate synthase family. Type 1 subfamily.</text>
</comment>
<proteinExistence type="inferred from homology"/>
<evidence type="ECO:0000255" key="1">
    <source>
        <dbReference type="HAMAP-Rule" id="MF_00005"/>
    </source>
</evidence>
<reference key="1">
    <citation type="journal article" date="2009" name="Science">
        <title>The dynamics and time scale of ongoing genomic erosion in symbiotic bacteria.</title>
        <authorList>
            <person name="Moran N.A."/>
            <person name="McLaughlin H.J."/>
            <person name="Sorek R."/>
        </authorList>
    </citation>
    <scope>NUCLEOTIDE SEQUENCE [LARGE SCALE GENOMIC DNA]</scope>
    <source>
        <strain>5A</strain>
    </source>
</reference>
<dbReference type="EC" id="6.3.4.5" evidence="1"/>
<dbReference type="EMBL" id="CP001161">
    <property type="protein sequence ID" value="ACL30430.1"/>
    <property type="molecule type" value="Genomic_DNA"/>
</dbReference>
<dbReference type="RefSeq" id="WP_009874007.1">
    <property type="nucleotide sequence ID" value="NC_011833.1"/>
</dbReference>
<dbReference type="SMR" id="B8D8K8"/>
<dbReference type="KEGG" id="bap:BUAP5A_049"/>
<dbReference type="HOGENOM" id="CLU_032784_4_2_6"/>
<dbReference type="OrthoDB" id="9801641at2"/>
<dbReference type="UniPathway" id="UPA00068">
    <property type="reaction ID" value="UER00113"/>
</dbReference>
<dbReference type="Proteomes" id="UP000006904">
    <property type="component" value="Chromosome"/>
</dbReference>
<dbReference type="GO" id="GO:0005737">
    <property type="term" value="C:cytoplasm"/>
    <property type="evidence" value="ECO:0007669"/>
    <property type="project" value="UniProtKB-SubCell"/>
</dbReference>
<dbReference type="GO" id="GO:0004055">
    <property type="term" value="F:argininosuccinate synthase activity"/>
    <property type="evidence" value="ECO:0007669"/>
    <property type="project" value="UniProtKB-UniRule"/>
</dbReference>
<dbReference type="GO" id="GO:0005524">
    <property type="term" value="F:ATP binding"/>
    <property type="evidence" value="ECO:0007669"/>
    <property type="project" value="UniProtKB-UniRule"/>
</dbReference>
<dbReference type="GO" id="GO:0000053">
    <property type="term" value="P:argininosuccinate metabolic process"/>
    <property type="evidence" value="ECO:0007669"/>
    <property type="project" value="TreeGrafter"/>
</dbReference>
<dbReference type="GO" id="GO:0006526">
    <property type="term" value="P:L-arginine biosynthetic process"/>
    <property type="evidence" value="ECO:0007669"/>
    <property type="project" value="UniProtKB-UniRule"/>
</dbReference>
<dbReference type="GO" id="GO:0000050">
    <property type="term" value="P:urea cycle"/>
    <property type="evidence" value="ECO:0007669"/>
    <property type="project" value="TreeGrafter"/>
</dbReference>
<dbReference type="CDD" id="cd01999">
    <property type="entry name" value="ASS"/>
    <property type="match status" value="1"/>
</dbReference>
<dbReference type="FunFam" id="3.40.50.620:FF:000019">
    <property type="entry name" value="Argininosuccinate synthase"/>
    <property type="match status" value="1"/>
</dbReference>
<dbReference type="FunFam" id="3.90.1260.10:FF:000007">
    <property type="entry name" value="Argininosuccinate synthase"/>
    <property type="match status" value="1"/>
</dbReference>
<dbReference type="Gene3D" id="3.90.1260.10">
    <property type="entry name" value="Argininosuccinate synthetase, chain A, domain 2"/>
    <property type="match status" value="1"/>
</dbReference>
<dbReference type="Gene3D" id="3.40.50.620">
    <property type="entry name" value="HUPs"/>
    <property type="match status" value="1"/>
</dbReference>
<dbReference type="Gene3D" id="1.20.5.470">
    <property type="entry name" value="Single helix bin"/>
    <property type="match status" value="1"/>
</dbReference>
<dbReference type="HAMAP" id="MF_00005">
    <property type="entry name" value="Arg_succ_synth_type1"/>
    <property type="match status" value="1"/>
</dbReference>
<dbReference type="InterPro" id="IPR048268">
    <property type="entry name" value="Arginosuc_syn_C"/>
</dbReference>
<dbReference type="InterPro" id="IPR048267">
    <property type="entry name" value="Arginosuc_syn_N"/>
</dbReference>
<dbReference type="InterPro" id="IPR001518">
    <property type="entry name" value="Arginosuc_synth"/>
</dbReference>
<dbReference type="InterPro" id="IPR018223">
    <property type="entry name" value="Arginosuc_synth_CS"/>
</dbReference>
<dbReference type="InterPro" id="IPR023434">
    <property type="entry name" value="Arginosuc_synth_type_1_subfam"/>
</dbReference>
<dbReference type="InterPro" id="IPR024074">
    <property type="entry name" value="AS_cat/multimer_dom_body"/>
</dbReference>
<dbReference type="InterPro" id="IPR014729">
    <property type="entry name" value="Rossmann-like_a/b/a_fold"/>
</dbReference>
<dbReference type="NCBIfam" id="TIGR00032">
    <property type="entry name" value="argG"/>
    <property type="match status" value="1"/>
</dbReference>
<dbReference type="NCBIfam" id="NF001770">
    <property type="entry name" value="PRK00509.1"/>
    <property type="match status" value="1"/>
</dbReference>
<dbReference type="PANTHER" id="PTHR11587">
    <property type="entry name" value="ARGININOSUCCINATE SYNTHASE"/>
    <property type="match status" value="1"/>
</dbReference>
<dbReference type="PANTHER" id="PTHR11587:SF2">
    <property type="entry name" value="ARGININOSUCCINATE SYNTHASE"/>
    <property type="match status" value="1"/>
</dbReference>
<dbReference type="Pfam" id="PF20979">
    <property type="entry name" value="Arginosuc_syn_C"/>
    <property type="match status" value="1"/>
</dbReference>
<dbReference type="Pfam" id="PF00764">
    <property type="entry name" value="Arginosuc_synth"/>
    <property type="match status" value="1"/>
</dbReference>
<dbReference type="SUPFAM" id="SSF52402">
    <property type="entry name" value="Adenine nucleotide alpha hydrolases-like"/>
    <property type="match status" value="1"/>
</dbReference>
<dbReference type="SUPFAM" id="SSF69864">
    <property type="entry name" value="Argininosuccinate synthetase, C-terminal domain"/>
    <property type="match status" value="1"/>
</dbReference>
<dbReference type="PROSITE" id="PS00564">
    <property type="entry name" value="ARGININOSUCCIN_SYN_1"/>
    <property type="match status" value="1"/>
</dbReference>
<dbReference type="PROSITE" id="PS00565">
    <property type="entry name" value="ARGININOSUCCIN_SYN_2"/>
    <property type="match status" value="1"/>
</dbReference>
<organism>
    <name type="scientific">Buchnera aphidicola subsp. Acyrthosiphon pisum (strain 5A)</name>
    <dbReference type="NCBI Taxonomy" id="563178"/>
    <lineage>
        <taxon>Bacteria</taxon>
        <taxon>Pseudomonadati</taxon>
        <taxon>Pseudomonadota</taxon>
        <taxon>Gammaproteobacteria</taxon>
        <taxon>Enterobacterales</taxon>
        <taxon>Erwiniaceae</taxon>
        <taxon>Buchnera</taxon>
    </lineage>
</organism>
<feature type="chain" id="PRO_1000191885" description="Argininosuccinate synthase">
    <location>
        <begin position="1"/>
        <end position="403"/>
    </location>
</feature>
<feature type="binding site" evidence="1">
    <location>
        <begin position="12"/>
        <end position="20"/>
    </location>
    <ligand>
        <name>ATP</name>
        <dbReference type="ChEBI" id="CHEBI:30616"/>
    </ligand>
</feature>
<feature type="binding site" evidence="1">
    <location>
        <position position="39"/>
    </location>
    <ligand>
        <name>ATP</name>
        <dbReference type="ChEBI" id="CHEBI:30616"/>
    </ligand>
</feature>
<feature type="binding site" evidence="1">
    <location>
        <position position="91"/>
    </location>
    <ligand>
        <name>L-citrulline</name>
        <dbReference type="ChEBI" id="CHEBI:57743"/>
    </ligand>
</feature>
<feature type="binding site" evidence="1">
    <location>
        <position position="121"/>
    </location>
    <ligand>
        <name>ATP</name>
        <dbReference type="ChEBI" id="CHEBI:30616"/>
    </ligand>
</feature>
<feature type="binding site" evidence="1">
    <location>
        <position position="123"/>
    </location>
    <ligand>
        <name>L-aspartate</name>
        <dbReference type="ChEBI" id="CHEBI:29991"/>
    </ligand>
</feature>
<feature type="binding site" evidence="1">
    <location>
        <position position="127"/>
    </location>
    <ligand>
        <name>L-aspartate</name>
        <dbReference type="ChEBI" id="CHEBI:29991"/>
    </ligand>
</feature>
<feature type="binding site" evidence="1">
    <location>
        <position position="127"/>
    </location>
    <ligand>
        <name>L-citrulline</name>
        <dbReference type="ChEBI" id="CHEBI:57743"/>
    </ligand>
</feature>
<feature type="binding site" evidence="1">
    <location>
        <position position="128"/>
    </location>
    <ligand>
        <name>L-aspartate</name>
        <dbReference type="ChEBI" id="CHEBI:29991"/>
    </ligand>
</feature>
<feature type="binding site" evidence="1">
    <location>
        <position position="131"/>
    </location>
    <ligand>
        <name>L-citrulline</name>
        <dbReference type="ChEBI" id="CHEBI:57743"/>
    </ligand>
</feature>
<feature type="binding site" evidence="1">
    <location>
        <position position="180"/>
    </location>
    <ligand>
        <name>L-citrulline</name>
        <dbReference type="ChEBI" id="CHEBI:57743"/>
    </ligand>
</feature>
<feature type="binding site" evidence="1">
    <location>
        <position position="189"/>
    </location>
    <ligand>
        <name>L-citrulline</name>
        <dbReference type="ChEBI" id="CHEBI:57743"/>
    </ligand>
</feature>
<feature type="binding site" evidence="1">
    <location>
        <position position="265"/>
    </location>
    <ligand>
        <name>L-citrulline</name>
        <dbReference type="ChEBI" id="CHEBI:57743"/>
    </ligand>
</feature>
<feature type="binding site" evidence="1">
    <location>
        <position position="277"/>
    </location>
    <ligand>
        <name>L-citrulline</name>
        <dbReference type="ChEBI" id="CHEBI:57743"/>
    </ligand>
</feature>